<gene>
    <name type="primary">IZH2</name>
    <name type="synonym">PHO36</name>
    <name type="ordered locus">YOL002C</name>
    <name type="ORF">UND327</name>
</gene>
<protein>
    <recommendedName>
        <fullName>ADIPOR-like receptor IZH2</fullName>
    </recommendedName>
    <alternativeName>
        <fullName>Phosphate metabolism protein 36</fullName>
    </alternativeName>
</protein>
<name>IZH2_YEAST</name>
<proteinExistence type="evidence at protein level"/>
<keyword id="KW-0276">Fatty acid metabolism</keyword>
<keyword id="KW-0443">Lipid metabolism</keyword>
<keyword id="KW-0472">Membrane</keyword>
<keyword id="KW-0675">Receptor</keyword>
<keyword id="KW-1185">Reference proteome</keyword>
<keyword id="KW-0812">Transmembrane</keyword>
<keyword id="KW-1133">Transmembrane helix</keyword>
<comment type="function">
    <text evidence="2">Probable receptor, which is involved in metabolic pathways that regulate lipid metabolism such as fatty acid oxidation.</text>
</comment>
<comment type="subcellular location">
    <subcellularLocation>
        <location>Membrane</location>
        <topology>Multi-pass membrane protein</topology>
    </subcellularLocation>
</comment>
<comment type="induction">
    <text evidence="3">Regulated by OAF1 and PIP2. Highly expressed in presence of glucose. Expressed at lower level in presence of glycerol or glycerol and oleate. Highly expressed in the presence of saturated fatty-acids such as myristate.</text>
</comment>
<comment type="similarity">
    <text evidence="4">Belongs to the ADIPOR family.</text>
</comment>
<comment type="sequence caution" evidence="4">
    <conflict type="erroneous initiation">
        <sequence resource="EMBL-CDS" id="AAC49478"/>
    </conflict>
</comment>
<comment type="sequence caution" evidence="4">
    <conflict type="erroneous initiation">
        <sequence resource="EMBL-CDS" id="CAA99001"/>
    </conflict>
</comment>
<accession>Q12442</accession>
<accession>D6W265</accession>
<dbReference type="EMBL" id="U43491">
    <property type="protein sequence ID" value="AAC49478.1"/>
    <property type="status" value="ALT_INIT"/>
    <property type="molecule type" value="Genomic_DNA"/>
</dbReference>
<dbReference type="EMBL" id="Z74744">
    <property type="protein sequence ID" value="CAA99001.1"/>
    <property type="status" value="ALT_INIT"/>
    <property type="molecule type" value="Genomic_DNA"/>
</dbReference>
<dbReference type="EMBL" id="BK006948">
    <property type="protein sequence ID" value="DAA10781.1"/>
    <property type="molecule type" value="Genomic_DNA"/>
</dbReference>
<dbReference type="PIR" id="S61982">
    <property type="entry name" value="S61982"/>
</dbReference>
<dbReference type="RefSeq" id="NP_014641.2">
    <property type="nucleotide sequence ID" value="NM_001183256.1"/>
</dbReference>
<dbReference type="SMR" id="Q12442"/>
<dbReference type="BioGRID" id="34402">
    <property type="interactions" value="308"/>
</dbReference>
<dbReference type="DIP" id="DIP-5616N"/>
<dbReference type="FunCoup" id="Q12442">
    <property type="interactions" value="402"/>
</dbReference>
<dbReference type="IntAct" id="Q12442">
    <property type="interactions" value="1"/>
</dbReference>
<dbReference type="STRING" id="4932.YOL002C"/>
<dbReference type="iPTMnet" id="Q12442"/>
<dbReference type="PaxDb" id="4932-YOL002C"/>
<dbReference type="PeptideAtlas" id="Q12442"/>
<dbReference type="EnsemblFungi" id="YOL002C_mRNA">
    <property type="protein sequence ID" value="YOL002C"/>
    <property type="gene ID" value="YOL002C"/>
</dbReference>
<dbReference type="GeneID" id="854160"/>
<dbReference type="KEGG" id="sce:YOL002C"/>
<dbReference type="AGR" id="SGD:S000005362"/>
<dbReference type="SGD" id="S000005362">
    <property type="gene designation" value="IZH2"/>
</dbReference>
<dbReference type="VEuPathDB" id="FungiDB:YOL002C"/>
<dbReference type="eggNOG" id="KOG0748">
    <property type="taxonomic scope" value="Eukaryota"/>
</dbReference>
<dbReference type="GeneTree" id="ENSGT00940000170813"/>
<dbReference type="HOGENOM" id="CLU_023075_2_0_1"/>
<dbReference type="InParanoid" id="Q12442"/>
<dbReference type="OMA" id="IGNACDY"/>
<dbReference type="OrthoDB" id="529367at2759"/>
<dbReference type="BioCyc" id="YEAST:G3O-33419-MONOMER"/>
<dbReference type="BioGRID-ORCS" id="854160">
    <property type="hits" value="0 hits in 10 CRISPR screens"/>
</dbReference>
<dbReference type="PRO" id="PR:Q12442"/>
<dbReference type="Proteomes" id="UP000002311">
    <property type="component" value="Chromosome XV"/>
</dbReference>
<dbReference type="RNAct" id="Q12442">
    <property type="molecule type" value="protein"/>
</dbReference>
<dbReference type="GO" id="GO:0000324">
    <property type="term" value="C:fungal-type vacuole"/>
    <property type="evidence" value="ECO:0007005"/>
    <property type="project" value="SGD"/>
</dbReference>
<dbReference type="GO" id="GO:0005886">
    <property type="term" value="C:plasma membrane"/>
    <property type="evidence" value="ECO:0000314"/>
    <property type="project" value="SGD"/>
</dbReference>
<dbReference type="GO" id="GO:0038023">
    <property type="term" value="F:signaling receptor activity"/>
    <property type="evidence" value="ECO:0000318"/>
    <property type="project" value="GO_Central"/>
</dbReference>
<dbReference type="GO" id="GO:0006631">
    <property type="term" value="P:fatty acid metabolic process"/>
    <property type="evidence" value="ECO:0007669"/>
    <property type="project" value="UniProtKB-KW"/>
</dbReference>
<dbReference type="GO" id="GO:0006882">
    <property type="term" value="P:intracellular zinc ion homeostasis"/>
    <property type="evidence" value="ECO:0000315"/>
    <property type="project" value="SGD"/>
</dbReference>
<dbReference type="GO" id="GO:0000122">
    <property type="term" value="P:negative regulation of transcription by RNA polymerase II"/>
    <property type="evidence" value="ECO:0000314"/>
    <property type="project" value="SGD"/>
</dbReference>
<dbReference type="GO" id="GO:0009636">
    <property type="term" value="P:response to toxic substance"/>
    <property type="evidence" value="ECO:0000315"/>
    <property type="project" value="SGD"/>
</dbReference>
<dbReference type="InterPro" id="IPR004254">
    <property type="entry name" value="AdipoR/HlyIII-related"/>
</dbReference>
<dbReference type="PANTHER" id="PTHR20855:SF52">
    <property type="entry name" value="ADIPONECTIN RECEPTOR PROTEIN"/>
    <property type="match status" value="1"/>
</dbReference>
<dbReference type="PANTHER" id="PTHR20855">
    <property type="entry name" value="ADIPOR/PROGESTIN RECEPTOR-RELATED"/>
    <property type="match status" value="1"/>
</dbReference>
<dbReference type="Pfam" id="PF03006">
    <property type="entry name" value="HlyIII"/>
    <property type="match status" value="1"/>
</dbReference>
<sequence length="317" mass="36279">MSTLLERTKSVQELKKRAAGKTSANPAEVAKAKKVLRRLYSWDEIPEWQRDNDFILHGYVKETSSFIETFKSLFYLHNESVNIYSHLIPALGFFTVLLLDKSTIKVFATTTWLDHMVIDLFYSGAFACLILSSSFHCLKSHSLRIATLGNKLDYLGICILIVTSMVSILYYGYFEKFSLFCLFALITVSFGIACSIVSLKDKFRKREWRPYRAGLFVCFGLSSIIPIFSGLYCYSFSEIWTQIQLFWVLLGGVLYIIGAVLYGMRFPEKICPGKFDIWGHSHQLFHFLVVIAALCHLRGLLNSYELVHIKMENGIVS</sequence>
<reference key="1">
    <citation type="journal article" date="1996" name="Yeast">
        <title>The sequence of a 30 kb fragment on the left arm of chromosome XV from Saccharomyces cerevisiae reveals 15 open reading frames, five of which correspond to previously identified genes.</title>
        <authorList>
            <person name="Sterky F."/>
            <person name="Holmberg A."/>
            <person name="Pettersson B."/>
            <person name="Uhlen M."/>
        </authorList>
    </citation>
    <scope>NUCLEOTIDE SEQUENCE [GENOMIC DNA]</scope>
</reference>
<reference key="2">
    <citation type="journal article" date="1997" name="Nature">
        <title>The nucleotide sequence of Saccharomyces cerevisiae chromosome XV.</title>
        <authorList>
            <person name="Dujon B."/>
            <person name="Albermann K."/>
            <person name="Aldea M."/>
            <person name="Alexandraki D."/>
            <person name="Ansorge W."/>
            <person name="Arino J."/>
            <person name="Benes V."/>
            <person name="Bohn C."/>
            <person name="Bolotin-Fukuhara M."/>
            <person name="Bordonne R."/>
            <person name="Boyer J."/>
            <person name="Camasses A."/>
            <person name="Casamayor A."/>
            <person name="Casas C."/>
            <person name="Cheret G."/>
            <person name="Cziepluch C."/>
            <person name="Daignan-Fornier B."/>
            <person name="Dang V.-D."/>
            <person name="de Haan M."/>
            <person name="Delius H."/>
            <person name="Durand P."/>
            <person name="Fairhead C."/>
            <person name="Feldmann H."/>
            <person name="Gaillon L."/>
            <person name="Galisson F."/>
            <person name="Gamo F.-J."/>
            <person name="Gancedo C."/>
            <person name="Goffeau A."/>
            <person name="Goulding S.E."/>
            <person name="Grivell L.A."/>
            <person name="Habbig B."/>
            <person name="Hand N.J."/>
            <person name="Hani J."/>
            <person name="Hattenhorst U."/>
            <person name="Hebling U."/>
            <person name="Hernando Y."/>
            <person name="Herrero E."/>
            <person name="Heumann K."/>
            <person name="Hiesel R."/>
            <person name="Hilger F."/>
            <person name="Hofmann B."/>
            <person name="Hollenberg C.P."/>
            <person name="Hughes B."/>
            <person name="Jauniaux J.-C."/>
            <person name="Kalogeropoulos A."/>
            <person name="Katsoulou C."/>
            <person name="Kordes E."/>
            <person name="Lafuente M.J."/>
            <person name="Landt O."/>
            <person name="Louis E.J."/>
            <person name="Maarse A.C."/>
            <person name="Madania A."/>
            <person name="Mannhaupt G."/>
            <person name="Marck C."/>
            <person name="Martin R.P."/>
            <person name="Mewes H.-W."/>
            <person name="Michaux G."/>
            <person name="Paces V."/>
            <person name="Parle-McDermott A.G."/>
            <person name="Pearson B.M."/>
            <person name="Perrin A."/>
            <person name="Pettersson B."/>
            <person name="Poch O."/>
            <person name="Pohl T.M."/>
            <person name="Poirey R."/>
            <person name="Portetelle D."/>
            <person name="Pujol A."/>
            <person name="Purnelle B."/>
            <person name="Ramezani Rad M."/>
            <person name="Rechmann S."/>
            <person name="Schwager C."/>
            <person name="Schweizer M."/>
            <person name="Sor F."/>
            <person name="Sterky F."/>
            <person name="Tarassov I.A."/>
            <person name="Teodoru C."/>
            <person name="Tettelin H."/>
            <person name="Thierry A."/>
            <person name="Tobiasch E."/>
            <person name="Tzermia M."/>
            <person name="Uhlen M."/>
            <person name="Unseld M."/>
            <person name="Valens M."/>
            <person name="Vandenbol M."/>
            <person name="Vetter I."/>
            <person name="Vlcek C."/>
            <person name="Voet M."/>
            <person name="Volckaert G."/>
            <person name="Voss H."/>
            <person name="Wambutt R."/>
            <person name="Wedler H."/>
            <person name="Wiemann S."/>
            <person name="Winsor B."/>
            <person name="Wolfe K.H."/>
            <person name="Zollner A."/>
            <person name="Zumstein E."/>
            <person name="Kleine K."/>
        </authorList>
    </citation>
    <scope>NUCLEOTIDE SEQUENCE [LARGE SCALE GENOMIC DNA]</scope>
    <source>
        <strain>ATCC 204508 / S288c</strain>
    </source>
</reference>
<reference key="3">
    <citation type="journal article" date="2014" name="G3 (Bethesda)">
        <title>The reference genome sequence of Saccharomyces cerevisiae: Then and now.</title>
        <authorList>
            <person name="Engel S.R."/>
            <person name="Dietrich F.S."/>
            <person name="Fisk D.G."/>
            <person name="Binkley G."/>
            <person name="Balakrishnan R."/>
            <person name="Costanzo M.C."/>
            <person name="Dwight S.S."/>
            <person name="Hitz B.C."/>
            <person name="Karra K."/>
            <person name="Nash R.S."/>
            <person name="Weng S."/>
            <person name="Wong E.D."/>
            <person name="Lloyd P."/>
            <person name="Skrzypek M.S."/>
            <person name="Miyasato S.R."/>
            <person name="Simison M."/>
            <person name="Cherry J.M."/>
        </authorList>
    </citation>
    <scope>GENOME REANNOTATION</scope>
    <source>
        <strain>ATCC 204508 / S288c</strain>
    </source>
</reference>
<reference key="4">
    <citation type="journal article" date="1998" name="Mol. Cell. Biol.">
        <title>Global regulatory functions of Oaf1p and Pip2p (Oaf2p), transcription factors that regulate genes encoding peroxisomal proteins in Saccharomyces cerevisiae.</title>
        <authorList>
            <person name="Karpichev I.V."/>
            <person name="Small G.M."/>
        </authorList>
    </citation>
    <scope>INDUCTION</scope>
</reference>
<reference key="5">
    <citation type="journal article" date="2002" name="J. Biol. Chem.">
        <title>Multiple regulatory roles of a novel Saccharomyces cerevisiae protein, encoded by YOL002c, in lipid and phosphate metabolism.</title>
        <authorList>
            <person name="Karpichev I.V."/>
            <person name="Cornivelli L."/>
            <person name="Small G.M."/>
        </authorList>
    </citation>
    <scope>FUNCTION</scope>
    <scope>IDENTIFICATION OF PROBABLE INITIATION SITE</scope>
</reference>
<reference key="6">
    <citation type="journal article" date="2006" name="Proc. Natl. Acad. Sci. U.S.A.">
        <title>A global topology map of the Saccharomyces cerevisiae membrane proteome.</title>
        <authorList>
            <person name="Kim H."/>
            <person name="Melen K."/>
            <person name="Oesterberg M."/>
            <person name="von Heijne G."/>
        </authorList>
    </citation>
    <scope>TOPOLOGY [LARGE SCALE ANALYSIS]</scope>
    <source>
        <strain>ATCC 208353 / W303-1A</strain>
    </source>
</reference>
<organism>
    <name type="scientific">Saccharomyces cerevisiae (strain ATCC 204508 / S288c)</name>
    <name type="common">Baker's yeast</name>
    <dbReference type="NCBI Taxonomy" id="559292"/>
    <lineage>
        <taxon>Eukaryota</taxon>
        <taxon>Fungi</taxon>
        <taxon>Dikarya</taxon>
        <taxon>Ascomycota</taxon>
        <taxon>Saccharomycotina</taxon>
        <taxon>Saccharomycetes</taxon>
        <taxon>Saccharomycetales</taxon>
        <taxon>Saccharomycetaceae</taxon>
        <taxon>Saccharomyces</taxon>
    </lineage>
</organism>
<evidence type="ECO:0000255" key="1"/>
<evidence type="ECO:0000269" key="2">
    <source>
    </source>
</evidence>
<evidence type="ECO:0000269" key="3">
    <source>
    </source>
</evidence>
<evidence type="ECO:0000305" key="4"/>
<feature type="chain" id="PRO_0000218834" description="ADIPOR-like receptor IZH2">
    <location>
        <begin position="1"/>
        <end position="317"/>
    </location>
</feature>
<feature type="topological domain" description="Cytoplasmic" evidence="1">
    <location>
        <begin position="1"/>
        <end position="78"/>
    </location>
</feature>
<feature type="transmembrane region" description="Helical; Name=1" evidence="1">
    <location>
        <begin position="79"/>
        <end position="99"/>
    </location>
</feature>
<feature type="topological domain" description="Extracellular" evidence="1">
    <location>
        <begin position="100"/>
        <end position="110"/>
    </location>
</feature>
<feature type="transmembrane region" description="Helical; Name=2" evidence="1">
    <location>
        <begin position="111"/>
        <end position="131"/>
    </location>
</feature>
<feature type="topological domain" description="Cytoplasmic" evidence="1">
    <location>
        <begin position="132"/>
        <end position="153"/>
    </location>
</feature>
<feature type="transmembrane region" description="Helical; Name=3" evidence="1">
    <location>
        <begin position="154"/>
        <end position="174"/>
    </location>
</feature>
<feature type="topological domain" description="Extracellular" evidence="1">
    <location>
        <begin position="175"/>
        <end position="176"/>
    </location>
</feature>
<feature type="transmembrane region" description="Helical; Name=4" evidence="1">
    <location>
        <begin position="177"/>
        <end position="197"/>
    </location>
</feature>
<feature type="topological domain" description="Cytoplasmic" evidence="1">
    <location>
        <begin position="198"/>
        <end position="212"/>
    </location>
</feature>
<feature type="transmembrane region" description="Helical; Name=5" evidence="1">
    <location>
        <begin position="213"/>
        <end position="233"/>
    </location>
</feature>
<feature type="topological domain" description="Extracellular" evidence="1">
    <location>
        <begin position="234"/>
        <end position="242"/>
    </location>
</feature>
<feature type="transmembrane region" description="Helical; Name=6" evidence="1">
    <location>
        <begin position="243"/>
        <end position="263"/>
    </location>
</feature>
<feature type="topological domain" description="Cytoplasmic" evidence="1">
    <location>
        <begin position="264"/>
        <end position="276"/>
    </location>
</feature>
<feature type="transmembrane region" description="Helical; Name=7" evidence="1">
    <location>
        <begin position="277"/>
        <end position="297"/>
    </location>
</feature>
<feature type="topological domain" description="Extracellular" evidence="1">
    <location>
        <begin position="298"/>
        <end position="317"/>
    </location>
</feature>